<reference key="1">
    <citation type="journal article" date="2002" name="Lancet">
        <title>Genome and virulence determinants of high virulence community-acquired MRSA.</title>
        <authorList>
            <person name="Baba T."/>
            <person name="Takeuchi F."/>
            <person name="Kuroda M."/>
            <person name="Yuzawa H."/>
            <person name="Aoki K."/>
            <person name="Oguchi A."/>
            <person name="Nagai Y."/>
            <person name="Iwama N."/>
            <person name="Asano K."/>
            <person name="Naimi T."/>
            <person name="Kuroda H."/>
            <person name="Cui L."/>
            <person name="Yamamoto K."/>
            <person name="Hiramatsu K."/>
        </authorList>
    </citation>
    <scope>NUCLEOTIDE SEQUENCE [LARGE SCALE GENOMIC DNA]</scope>
    <source>
        <strain>MW2</strain>
    </source>
</reference>
<proteinExistence type="inferred from homology"/>
<feature type="chain" id="PRO_0000300676" description="Low molecular weight protein-tyrosine-phosphatase PtpB">
    <location>
        <begin position="1"/>
        <end position="139"/>
    </location>
</feature>
<feature type="active site" description="Nucleophile" evidence="2">
    <location>
        <position position="7"/>
    </location>
</feature>
<feature type="active site" evidence="2">
    <location>
        <position position="13"/>
    </location>
</feature>
<feature type="active site" description="Proton donor" evidence="2">
    <location>
        <position position="111"/>
    </location>
</feature>
<comment type="function">
    <text evidence="1">Dephosphorylates the phosphotyrosine-containing proteins.</text>
</comment>
<comment type="catalytic activity">
    <reaction>
        <text>O-phospho-L-tyrosyl-[protein] + H2O = L-tyrosyl-[protein] + phosphate</text>
        <dbReference type="Rhea" id="RHEA:10684"/>
        <dbReference type="Rhea" id="RHEA-COMP:10136"/>
        <dbReference type="Rhea" id="RHEA-COMP:20101"/>
        <dbReference type="ChEBI" id="CHEBI:15377"/>
        <dbReference type="ChEBI" id="CHEBI:43474"/>
        <dbReference type="ChEBI" id="CHEBI:46858"/>
        <dbReference type="ChEBI" id="CHEBI:61978"/>
        <dbReference type="EC" id="3.1.3.48"/>
    </reaction>
</comment>
<comment type="similarity">
    <text evidence="3">Belongs to the low molecular weight phosphotyrosine protein phosphatase family.</text>
</comment>
<keyword id="KW-0378">Hydrolase</keyword>
<keyword id="KW-0904">Protein phosphatase</keyword>
<gene>
    <name type="primary">ptpB</name>
    <name type="ordered locus">MW2039</name>
</gene>
<accession>Q7A0B9</accession>
<sequence length="139" mass="15788">MKILFVCTGNTCRSPLAESIAKEVMPNHQFESRGIFAVNNQGVSNYVEDLVEEHHLAETTLSQQFTEADLKADIILTMSYSHKELIEAHFGLQNHVFTLHEYVKEAGEVIDPYGGTKEMYVHTYEELVSLILKLKDIIC</sequence>
<organism>
    <name type="scientific">Staphylococcus aureus (strain MW2)</name>
    <dbReference type="NCBI Taxonomy" id="196620"/>
    <lineage>
        <taxon>Bacteria</taxon>
        <taxon>Bacillati</taxon>
        <taxon>Bacillota</taxon>
        <taxon>Bacilli</taxon>
        <taxon>Bacillales</taxon>
        <taxon>Staphylococcaceae</taxon>
        <taxon>Staphylococcus</taxon>
    </lineage>
</organism>
<name>PTPB_STAAW</name>
<protein>
    <recommendedName>
        <fullName>Low molecular weight protein-tyrosine-phosphatase PtpB</fullName>
        <ecNumber>3.1.3.48</ecNumber>
    </recommendedName>
    <alternativeName>
        <fullName>Phosphotyrosine phosphatase B</fullName>
        <shortName>PTPase B</shortName>
    </alternativeName>
</protein>
<dbReference type="EC" id="3.1.3.48"/>
<dbReference type="EMBL" id="BA000033">
    <property type="protein sequence ID" value="BAB95904.1"/>
    <property type="molecule type" value="Genomic_DNA"/>
</dbReference>
<dbReference type="RefSeq" id="WP_000697334.1">
    <property type="nucleotide sequence ID" value="NC_003923.1"/>
</dbReference>
<dbReference type="SMR" id="Q7A0B9"/>
<dbReference type="KEGG" id="sam:MW2039"/>
<dbReference type="HOGENOM" id="CLU_071415_1_2_9"/>
<dbReference type="GO" id="GO:0004725">
    <property type="term" value="F:protein tyrosine phosphatase activity"/>
    <property type="evidence" value="ECO:0007669"/>
    <property type="project" value="UniProtKB-EC"/>
</dbReference>
<dbReference type="CDD" id="cd16344">
    <property type="entry name" value="LMWPAP"/>
    <property type="match status" value="1"/>
</dbReference>
<dbReference type="Gene3D" id="3.40.50.2300">
    <property type="match status" value="1"/>
</dbReference>
<dbReference type="InterPro" id="IPR050438">
    <property type="entry name" value="LMW_PTPase"/>
</dbReference>
<dbReference type="InterPro" id="IPR023485">
    <property type="entry name" value="Ptyr_pPase"/>
</dbReference>
<dbReference type="InterPro" id="IPR036196">
    <property type="entry name" value="Ptyr_pPase_sf"/>
</dbReference>
<dbReference type="InterPro" id="IPR017867">
    <property type="entry name" value="Tyr_phospatase_low_mol_wt"/>
</dbReference>
<dbReference type="PANTHER" id="PTHR11717">
    <property type="entry name" value="LOW MOLECULAR WEIGHT PROTEIN TYROSINE PHOSPHATASE"/>
    <property type="match status" value="1"/>
</dbReference>
<dbReference type="PANTHER" id="PTHR11717:SF31">
    <property type="entry name" value="LOW MOLECULAR WEIGHT PROTEIN-TYROSINE-PHOSPHATASE ETP-RELATED"/>
    <property type="match status" value="1"/>
</dbReference>
<dbReference type="Pfam" id="PF01451">
    <property type="entry name" value="LMWPc"/>
    <property type="match status" value="1"/>
</dbReference>
<dbReference type="PRINTS" id="PR00719">
    <property type="entry name" value="LMWPTPASE"/>
</dbReference>
<dbReference type="SMART" id="SM00226">
    <property type="entry name" value="LMWPc"/>
    <property type="match status" value="1"/>
</dbReference>
<dbReference type="SUPFAM" id="SSF52788">
    <property type="entry name" value="Phosphotyrosine protein phosphatases I"/>
    <property type="match status" value="1"/>
</dbReference>
<evidence type="ECO:0000250" key="1"/>
<evidence type="ECO:0000250" key="2">
    <source>
        <dbReference type="UniProtKB" id="P11064"/>
    </source>
</evidence>
<evidence type="ECO:0000305" key="3"/>